<organism>
    <name type="scientific">Salmonella newport (strain SL254)</name>
    <dbReference type="NCBI Taxonomy" id="423368"/>
    <lineage>
        <taxon>Bacteria</taxon>
        <taxon>Pseudomonadati</taxon>
        <taxon>Pseudomonadota</taxon>
        <taxon>Gammaproteobacteria</taxon>
        <taxon>Enterobacterales</taxon>
        <taxon>Enterobacteriaceae</taxon>
        <taxon>Salmonella</taxon>
    </lineage>
</organism>
<sequence length="103" mass="11578">MYAVFQSGGKQHRVSEGQTVRLEKLDIATGETIEFAEVLMIANGEEVKIGVPFVDGGVIKAEVVAHGRGEKVKIVKFRRRKHYRKQQGHRQWFTDVKITGISA</sequence>
<protein>
    <recommendedName>
        <fullName evidence="1">Large ribosomal subunit protein bL21</fullName>
    </recommendedName>
    <alternativeName>
        <fullName evidence="2">50S ribosomal protein L21</fullName>
    </alternativeName>
</protein>
<evidence type="ECO:0000255" key="1">
    <source>
        <dbReference type="HAMAP-Rule" id="MF_01363"/>
    </source>
</evidence>
<evidence type="ECO:0000305" key="2"/>
<reference key="1">
    <citation type="journal article" date="2011" name="J. Bacteriol.">
        <title>Comparative genomics of 28 Salmonella enterica isolates: evidence for CRISPR-mediated adaptive sublineage evolution.</title>
        <authorList>
            <person name="Fricke W.F."/>
            <person name="Mammel M.K."/>
            <person name="McDermott P.F."/>
            <person name="Tartera C."/>
            <person name="White D.G."/>
            <person name="Leclerc J.E."/>
            <person name="Ravel J."/>
            <person name="Cebula T.A."/>
        </authorList>
    </citation>
    <scope>NUCLEOTIDE SEQUENCE [LARGE SCALE GENOMIC DNA]</scope>
    <source>
        <strain>SL254</strain>
    </source>
</reference>
<proteinExistence type="inferred from homology"/>
<comment type="function">
    <text evidence="1">This protein binds to 23S rRNA in the presence of protein L20.</text>
</comment>
<comment type="subunit">
    <text evidence="1">Part of the 50S ribosomal subunit. Contacts protein L20.</text>
</comment>
<comment type="similarity">
    <text evidence="1">Belongs to the bacterial ribosomal protein bL21 family.</text>
</comment>
<feature type="chain" id="PRO_1000143847" description="Large ribosomal subunit protein bL21">
    <location>
        <begin position="1"/>
        <end position="103"/>
    </location>
</feature>
<keyword id="KW-0687">Ribonucleoprotein</keyword>
<keyword id="KW-0689">Ribosomal protein</keyword>
<keyword id="KW-0694">RNA-binding</keyword>
<keyword id="KW-0699">rRNA-binding</keyword>
<dbReference type="EMBL" id="CP001113">
    <property type="protein sequence ID" value="ACF61417.1"/>
    <property type="molecule type" value="Genomic_DNA"/>
</dbReference>
<dbReference type="RefSeq" id="WP_000271396.1">
    <property type="nucleotide sequence ID" value="NZ_CCMR01000001.1"/>
</dbReference>
<dbReference type="SMR" id="B4T717"/>
<dbReference type="GeneID" id="66757643"/>
<dbReference type="KEGG" id="see:SNSL254_A3565"/>
<dbReference type="HOGENOM" id="CLU_061463_3_3_6"/>
<dbReference type="Proteomes" id="UP000008824">
    <property type="component" value="Chromosome"/>
</dbReference>
<dbReference type="GO" id="GO:0005737">
    <property type="term" value="C:cytoplasm"/>
    <property type="evidence" value="ECO:0007669"/>
    <property type="project" value="UniProtKB-ARBA"/>
</dbReference>
<dbReference type="GO" id="GO:1990904">
    <property type="term" value="C:ribonucleoprotein complex"/>
    <property type="evidence" value="ECO:0007669"/>
    <property type="project" value="UniProtKB-KW"/>
</dbReference>
<dbReference type="GO" id="GO:0005840">
    <property type="term" value="C:ribosome"/>
    <property type="evidence" value="ECO:0007669"/>
    <property type="project" value="UniProtKB-KW"/>
</dbReference>
<dbReference type="GO" id="GO:0019843">
    <property type="term" value="F:rRNA binding"/>
    <property type="evidence" value="ECO:0007669"/>
    <property type="project" value="UniProtKB-UniRule"/>
</dbReference>
<dbReference type="GO" id="GO:0003735">
    <property type="term" value="F:structural constituent of ribosome"/>
    <property type="evidence" value="ECO:0007669"/>
    <property type="project" value="InterPro"/>
</dbReference>
<dbReference type="GO" id="GO:0006412">
    <property type="term" value="P:translation"/>
    <property type="evidence" value="ECO:0007669"/>
    <property type="project" value="UniProtKB-UniRule"/>
</dbReference>
<dbReference type="HAMAP" id="MF_01363">
    <property type="entry name" value="Ribosomal_bL21"/>
    <property type="match status" value="1"/>
</dbReference>
<dbReference type="InterPro" id="IPR028909">
    <property type="entry name" value="bL21-like"/>
</dbReference>
<dbReference type="InterPro" id="IPR036164">
    <property type="entry name" value="bL21-like_sf"/>
</dbReference>
<dbReference type="InterPro" id="IPR001787">
    <property type="entry name" value="Ribosomal_bL21"/>
</dbReference>
<dbReference type="InterPro" id="IPR018258">
    <property type="entry name" value="Ribosomal_bL21_CS"/>
</dbReference>
<dbReference type="NCBIfam" id="TIGR00061">
    <property type="entry name" value="L21"/>
    <property type="match status" value="1"/>
</dbReference>
<dbReference type="PANTHER" id="PTHR21349">
    <property type="entry name" value="50S RIBOSOMAL PROTEIN L21"/>
    <property type="match status" value="1"/>
</dbReference>
<dbReference type="PANTHER" id="PTHR21349:SF0">
    <property type="entry name" value="LARGE RIBOSOMAL SUBUNIT PROTEIN BL21M"/>
    <property type="match status" value="1"/>
</dbReference>
<dbReference type="Pfam" id="PF00829">
    <property type="entry name" value="Ribosomal_L21p"/>
    <property type="match status" value="1"/>
</dbReference>
<dbReference type="SUPFAM" id="SSF141091">
    <property type="entry name" value="L21p-like"/>
    <property type="match status" value="1"/>
</dbReference>
<dbReference type="PROSITE" id="PS01169">
    <property type="entry name" value="RIBOSOMAL_L21"/>
    <property type="match status" value="1"/>
</dbReference>
<name>RL21_SALNS</name>
<gene>
    <name evidence="1" type="primary">rplU</name>
    <name type="ordered locus">SNSL254_A3565</name>
</gene>
<accession>B4T717</accession>